<organism>
    <name type="scientific">Trichormus variabilis (strain ATCC 29413 / PCC 7937)</name>
    <name type="common">Anabaena variabilis</name>
    <dbReference type="NCBI Taxonomy" id="240292"/>
    <lineage>
        <taxon>Bacteria</taxon>
        <taxon>Bacillati</taxon>
        <taxon>Cyanobacteriota</taxon>
        <taxon>Cyanophyceae</taxon>
        <taxon>Nostocales</taxon>
        <taxon>Nostocaceae</taxon>
        <taxon>Trichormus</taxon>
    </lineage>
</organism>
<evidence type="ECO:0000255" key="1">
    <source>
        <dbReference type="HAMAP-Rule" id="MF_01343"/>
    </source>
</evidence>
<evidence type="ECO:0000305" key="2"/>
<sequence>MALTQQRKQEIINNYQVHGTDTGSTDVQIAMLTERINRLSEHLQANKKDHSSRRGLLKLIGHRKRLLAYLQQESREKYQALISRLGIRG</sequence>
<dbReference type="EMBL" id="CP000117">
    <property type="protein sequence ID" value="ABA24248.1"/>
    <property type="molecule type" value="Genomic_DNA"/>
</dbReference>
<dbReference type="SMR" id="Q3M438"/>
<dbReference type="STRING" id="240292.Ava_4651"/>
<dbReference type="KEGG" id="ava:Ava_4651"/>
<dbReference type="eggNOG" id="COG0184">
    <property type="taxonomic scope" value="Bacteria"/>
</dbReference>
<dbReference type="HOGENOM" id="CLU_148518_0_0_3"/>
<dbReference type="Proteomes" id="UP000002533">
    <property type="component" value="Chromosome"/>
</dbReference>
<dbReference type="GO" id="GO:0022627">
    <property type="term" value="C:cytosolic small ribosomal subunit"/>
    <property type="evidence" value="ECO:0007669"/>
    <property type="project" value="TreeGrafter"/>
</dbReference>
<dbReference type="GO" id="GO:0019843">
    <property type="term" value="F:rRNA binding"/>
    <property type="evidence" value="ECO:0007669"/>
    <property type="project" value="UniProtKB-UniRule"/>
</dbReference>
<dbReference type="GO" id="GO:0003735">
    <property type="term" value="F:structural constituent of ribosome"/>
    <property type="evidence" value="ECO:0007669"/>
    <property type="project" value="InterPro"/>
</dbReference>
<dbReference type="GO" id="GO:0006412">
    <property type="term" value="P:translation"/>
    <property type="evidence" value="ECO:0007669"/>
    <property type="project" value="UniProtKB-UniRule"/>
</dbReference>
<dbReference type="CDD" id="cd00353">
    <property type="entry name" value="Ribosomal_S15p_S13e"/>
    <property type="match status" value="1"/>
</dbReference>
<dbReference type="FunFam" id="1.10.287.10:FF:000002">
    <property type="entry name" value="30S ribosomal protein S15"/>
    <property type="match status" value="1"/>
</dbReference>
<dbReference type="Gene3D" id="6.10.250.3130">
    <property type="match status" value="1"/>
</dbReference>
<dbReference type="Gene3D" id="1.10.287.10">
    <property type="entry name" value="S15/NS1, RNA-binding"/>
    <property type="match status" value="1"/>
</dbReference>
<dbReference type="HAMAP" id="MF_01343_B">
    <property type="entry name" value="Ribosomal_uS15_B"/>
    <property type="match status" value="1"/>
</dbReference>
<dbReference type="InterPro" id="IPR000589">
    <property type="entry name" value="Ribosomal_uS15"/>
</dbReference>
<dbReference type="InterPro" id="IPR005290">
    <property type="entry name" value="Ribosomal_uS15_bac-type"/>
</dbReference>
<dbReference type="InterPro" id="IPR009068">
    <property type="entry name" value="uS15_NS1_RNA-bd_sf"/>
</dbReference>
<dbReference type="NCBIfam" id="TIGR00952">
    <property type="entry name" value="S15_bact"/>
    <property type="match status" value="1"/>
</dbReference>
<dbReference type="PANTHER" id="PTHR23321">
    <property type="entry name" value="RIBOSOMAL PROTEIN S15, BACTERIAL AND ORGANELLAR"/>
    <property type="match status" value="1"/>
</dbReference>
<dbReference type="PANTHER" id="PTHR23321:SF26">
    <property type="entry name" value="SMALL RIBOSOMAL SUBUNIT PROTEIN US15M"/>
    <property type="match status" value="1"/>
</dbReference>
<dbReference type="Pfam" id="PF00312">
    <property type="entry name" value="Ribosomal_S15"/>
    <property type="match status" value="1"/>
</dbReference>
<dbReference type="SMART" id="SM01387">
    <property type="entry name" value="Ribosomal_S15"/>
    <property type="match status" value="1"/>
</dbReference>
<dbReference type="SUPFAM" id="SSF47060">
    <property type="entry name" value="S15/NS1 RNA-binding domain"/>
    <property type="match status" value="1"/>
</dbReference>
<dbReference type="PROSITE" id="PS00362">
    <property type="entry name" value="RIBOSOMAL_S15"/>
    <property type="match status" value="1"/>
</dbReference>
<comment type="function">
    <text evidence="1">One of the primary rRNA binding proteins, it binds directly to 16S rRNA where it helps nucleate assembly of the platform of the 30S subunit by binding and bridging several RNA helices of the 16S rRNA.</text>
</comment>
<comment type="function">
    <text evidence="1">Forms an intersubunit bridge (bridge B4) with the 23S rRNA of the 50S subunit in the ribosome.</text>
</comment>
<comment type="subunit">
    <text evidence="1">Part of the 30S ribosomal subunit. Forms a bridge to the 50S subunit in the 70S ribosome, contacting the 23S rRNA.</text>
</comment>
<comment type="similarity">
    <text evidence="1">Belongs to the universal ribosomal protein uS15 family.</text>
</comment>
<proteinExistence type="inferred from homology"/>
<gene>
    <name evidence="1" type="primary">rpsO</name>
    <name evidence="1" type="synonym">rps15</name>
    <name type="ordered locus">Ava_4651</name>
</gene>
<protein>
    <recommendedName>
        <fullName evidence="1">Small ribosomal subunit protein uS15</fullName>
    </recommendedName>
    <alternativeName>
        <fullName evidence="2">30S ribosomal protein S15</fullName>
    </alternativeName>
</protein>
<name>RS15_TRIV2</name>
<reference key="1">
    <citation type="journal article" date="2014" name="Stand. Genomic Sci.">
        <title>Complete genome sequence of Anabaena variabilis ATCC 29413.</title>
        <authorList>
            <person name="Thiel T."/>
            <person name="Pratte B.S."/>
            <person name="Zhong J."/>
            <person name="Goodwin L."/>
            <person name="Copeland A."/>
            <person name="Lucas S."/>
            <person name="Han C."/>
            <person name="Pitluck S."/>
            <person name="Land M.L."/>
            <person name="Kyrpides N.C."/>
            <person name="Woyke T."/>
        </authorList>
    </citation>
    <scope>NUCLEOTIDE SEQUENCE [LARGE SCALE GENOMIC DNA]</scope>
    <source>
        <strain>ATCC 29413 / PCC 7937</strain>
    </source>
</reference>
<accession>Q3M438</accession>
<feature type="chain" id="PRO_0000255475" description="Small ribosomal subunit protein uS15">
    <location>
        <begin position="1"/>
        <end position="89"/>
    </location>
</feature>
<keyword id="KW-0687">Ribonucleoprotein</keyword>
<keyword id="KW-0689">Ribosomal protein</keyword>
<keyword id="KW-0694">RNA-binding</keyword>
<keyword id="KW-0699">rRNA-binding</keyword>